<name>G6PI_KLEOX</name>
<keyword id="KW-0963">Cytoplasm</keyword>
<keyword id="KW-0312">Gluconeogenesis</keyword>
<keyword id="KW-0324">Glycolysis</keyword>
<keyword id="KW-0413">Isomerase</keyword>
<accession>P77877</accession>
<evidence type="ECO:0000255" key="1">
    <source>
        <dbReference type="HAMAP-Rule" id="MF_00473"/>
    </source>
</evidence>
<feature type="chain" id="PRO_0000180655" description="Glucose-6-phosphate isomerase">
    <location>
        <begin position="1" status="less than"/>
        <end position="167" status="greater than"/>
    </location>
</feature>
<feature type="active site" description="Proton donor" evidence="1">
    <location>
        <position position="54"/>
    </location>
</feature>
<feature type="active site" evidence="1">
    <location>
        <position position="85"/>
    </location>
</feature>
<feature type="non-terminal residue">
    <location>
        <position position="1"/>
    </location>
</feature>
<feature type="non-terminal residue">
    <location>
        <position position="167"/>
    </location>
</feature>
<proteinExistence type="evidence at transcript level"/>
<gene>
    <name evidence="1" type="primary">pgi</name>
</gene>
<comment type="function">
    <text evidence="1">Catalyzes the reversible isomerization of glucose-6-phosphate to fructose-6-phosphate.</text>
</comment>
<comment type="catalytic activity">
    <reaction evidence="1">
        <text>alpha-D-glucose 6-phosphate = beta-D-fructose 6-phosphate</text>
        <dbReference type="Rhea" id="RHEA:11816"/>
        <dbReference type="ChEBI" id="CHEBI:57634"/>
        <dbReference type="ChEBI" id="CHEBI:58225"/>
        <dbReference type="EC" id="5.3.1.9"/>
    </reaction>
</comment>
<comment type="pathway">
    <text evidence="1">Carbohydrate biosynthesis; gluconeogenesis.</text>
</comment>
<comment type="pathway">
    <text evidence="1">Carbohydrate degradation; glycolysis; D-glyceraldehyde 3-phosphate and glycerone phosphate from D-glucose: step 2/4.</text>
</comment>
<comment type="subcellular location">
    <subcellularLocation>
        <location evidence="1">Cytoplasm</location>
    </subcellularLocation>
</comment>
<comment type="similarity">
    <text evidence="1">Belongs to the GPI family.</text>
</comment>
<dbReference type="EC" id="5.3.1.9" evidence="1"/>
<dbReference type="EMBL" id="U54763">
    <property type="protein sequence ID" value="AAB50058.1"/>
    <property type="molecule type" value="mRNA"/>
</dbReference>
<dbReference type="SMR" id="P77877"/>
<dbReference type="STRING" id="571.AB185_05395"/>
<dbReference type="eggNOG" id="COG0166">
    <property type="taxonomic scope" value="Bacteria"/>
</dbReference>
<dbReference type="UniPathway" id="UPA00109">
    <property type="reaction ID" value="UER00181"/>
</dbReference>
<dbReference type="UniPathway" id="UPA00138"/>
<dbReference type="GO" id="GO:0005829">
    <property type="term" value="C:cytosol"/>
    <property type="evidence" value="ECO:0007669"/>
    <property type="project" value="TreeGrafter"/>
</dbReference>
<dbReference type="GO" id="GO:0097367">
    <property type="term" value="F:carbohydrate derivative binding"/>
    <property type="evidence" value="ECO:0007669"/>
    <property type="project" value="InterPro"/>
</dbReference>
<dbReference type="GO" id="GO:0004347">
    <property type="term" value="F:glucose-6-phosphate isomerase activity"/>
    <property type="evidence" value="ECO:0007669"/>
    <property type="project" value="UniProtKB-EC"/>
</dbReference>
<dbReference type="GO" id="GO:0048029">
    <property type="term" value="F:monosaccharide binding"/>
    <property type="evidence" value="ECO:0007669"/>
    <property type="project" value="TreeGrafter"/>
</dbReference>
<dbReference type="GO" id="GO:0006094">
    <property type="term" value="P:gluconeogenesis"/>
    <property type="evidence" value="ECO:0007669"/>
    <property type="project" value="UniProtKB-UniPathway"/>
</dbReference>
<dbReference type="GO" id="GO:0051156">
    <property type="term" value="P:glucose 6-phosphate metabolic process"/>
    <property type="evidence" value="ECO:0007669"/>
    <property type="project" value="TreeGrafter"/>
</dbReference>
<dbReference type="GO" id="GO:0006096">
    <property type="term" value="P:glycolytic process"/>
    <property type="evidence" value="ECO:0007669"/>
    <property type="project" value="UniProtKB-UniPathway"/>
</dbReference>
<dbReference type="CDD" id="cd05016">
    <property type="entry name" value="SIS_PGI_2"/>
    <property type="match status" value="1"/>
</dbReference>
<dbReference type="FunFam" id="3.40.50.10490:FF:000060">
    <property type="entry name" value="Glucose-6-phosphate isomerase"/>
    <property type="match status" value="1"/>
</dbReference>
<dbReference type="Gene3D" id="3.40.50.10490">
    <property type="entry name" value="Glucose-6-phosphate isomerase like protein, domain 1"/>
    <property type="match status" value="1"/>
</dbReference>
<dbReference type="InterPro" id="IPR001672">
    <property type="entry name" value="G6P_Isomerase"/>
</dbReference>
<dbReference type="InterPro" id="IPR046348">
    <property type="entry name" value="SIS_dom_sf"/>
</dbReference>
<dbReference type="InterPro" id="IPR035482">
    <property type="entry name" value="SIS_PGI_2"/>
</dbReference>
<dbReference type="PANTHER" id="PTHR11469">
    <property type="entry name" value="GLUCOSE-6-PHOSPHATE ISOMERASE"/>
    <property type="match status" value="1"/>
</dbReference>
<dbReference type="PANTHER" id="PTHR11469:SF1">
    <property type="entry name" value="GLUCOSE-6-PHOSPHATE ISOMERASE"/>
    <property type="match status" value="1"/>
</dbReference>
<dbReference type="Pfam" id="PF00342">
    <property type="entry name" value="PGI"/>
    <property type="match status" value="1"/>
</dbReference>
<dbReference type="PRINTS" id="PR00662">
    <property type="entry name" value="G6PISOMERASE"/>
</dbReference>
<dbReference type="SUPFAM" id="SSF53697">
    <property type="entry name" value="SIS domain"/>
    <property type="match status" value="1"/>
</dbReference>
<dbReference type="PROSITE" id="PS51463">
    <property type="entry name" value="P_GLUCOSE_ISOMERASE_3"/>
    <property type="match status" value="1"/>
</dbReference>
<protein>
    <recommendedName>
        <fullName evidence="1">Glucose-6-phosphate isomerase</fullName>
        <shortName evidence="1">GPI</shortName>
        <ecNumber evidence="1">5.3.1.9</ecNumber>
    </recommendedName>
    <alternativeName>
        <fullName evidence="1">Phosphoglucose isomerase</fullName>
        <shortName evidence="1">PGI</shortName>
    </alternativeName>
    <alternativeName>
        <fullName evidence="1">Phosphohexose isomerase</fullName>
        <shortName evidence="1">PHI</shortName>
    </alternativeName>
</protein>
<sequence length="167" mass="18875">KHFSTTAPEKNLPVLLALIGIWYNNFFGAETEAILPYDQYMHRFAAYFQQGNMESNGKYVDRNGNAVDYQTGPIIWGEPGTNGQHAFYQLIHQGTKMVPCDFIAPAITQNPLSDHHPKLLSNFFAQTEALAFGKSREVVEQEYRDQGKDPAALEHVVPFKVFEGNRP</sequence>
<organism>
    <name type="scientific">Klebsiella oxytoca</name>
    <dbReference type="NCBI Taxonomy" id="571"/>
    <lineage>
        <taxon>Bacteria</taxon>
        <taxon>Pseudomonadati</taxon>
        <taxon>Pseudomonadota</taxon>
        <taxon>Gammaproteobacteria</taxon>
        <taxon>Enterobacterales</taxon>
        <taxon>Enterobacteriaceae</taxon>
        <taxon>Klebsiella/Raoultella group</taxon>
        <taxon>Klebsiella</taxon>
    </lineage>
</organism>
<reference key="1">
    <citation type="journal article" date="1996" name="J. Mol. Evol.">
        <title>Transkingdom transfer of the phosphoglucose isomerase gene.</title>
        <authorList>
            <person name="Katz L.A."/>
        </authorList>
    </citation>
    <scope>NUCLEOTIDE SEQUENCE [MRNA]</scope>
    <source>
        <strain>EA321</strain>
    </source>
</reference>